<keyword id="KW-1003">Cell membrane</keyword>
<keyword id="KW-1015">Disulfide bond</keyword>
<keyword id="KW-0325">Glycoprotein</keyword>
<keyword id="KW-0333">Golgi apparatus</keyword>
<keyword id="KW-0336">GPI-anchor</keyword>
<keyword id="KW-0391">Immunity</keyword>
<keyword id="KW-0395">Inflammatory response</keyword>
<keyword id="KW-0399">Innate immunity</keyword>
<keyword id="KW-0433">Leucine-rich repeat</keyword>
<keyword id="KW-0449">Lipoprotein</keyword>
<keyword id="KW-0472">Membrane</keyword>
<keyword id="KW-1185">Reference proteome</keyword>
<keyword id="KW-0677">Repeat</keyword>
<keyword id="KW-0964">Secreted</keyword>
<keyword id="KW-0732">Signal</keyword>
<gene>
    <name type="primary">CD14</name>
</gene>
<organism>
    <name type="scientific">Oryctolagus cuniculus</name>
    <name type="common">Rabbit</name>
    <dbReference type="NCBI Taxonomy" id="9986"/>
    <lineage>
        <taxon>Eukaryota</taxon>
        <taxon>Metazoa</taxon>
        <taxon>Chordata</taxon>
        <taxon>Craniata</taxon>
        <taxon>Vertebrata</taxon>
        <taxon>Euteleostomi</taxon>
        <taxon>Mammalia</taxon>
        <taxon>Eutheria</taxon>
        <taxon>Euarchontoglires</taxon>
        <taxon>Glires</taxon>
        <taxon>Lagomorpha</taxon>
        <taxon>Leporidae</taxon>
        <taxon>Oryctolagus</taxon>
    </lineage>
</organism>
<reference key="1">
    <citation type="journal article" date="1992" name="J. Exp. Med.">
        <title>Transfection of CD14 into 70Z/3 cells dramatically enhances the sensitivity to complexes of lipopolysaccharide (LPS) and LPS binding protein.</title>
        <authorList>
            <person name="Lee J.D."/>
            <person name="Kato K."/>
            <person name="Tobias P.S."/>
            <person name="Kirkland T.N."/>
            <person name="Ulevitch R.J."/>
        </authorList>
    </citation>
    <scope>NUCLEOTIDE SEQUENCE [MRNA]</scope>
    <scope>FUNCTION</scope>
    <scope>SUBCELLULAR LOCATION</scope>
</reference>
<reference key="2">
    <citation type="submission" date="1997-08" db="EMBL/GenBank/DDBJ databases">
        <authorList>
            <person name="Ishida T."/>
            <person name="Setoguchi M."/>
            <person name="Matsuura K."/>
            <person name="Yasunori H."/>
            <person name="Akizuki S."/>
            <person name="Yamamoto S."/>
        </authorList>
    </citation>
    <scope>NUCLEOTIDE SEQUENCE [MRNA]</scope>
    <source>
        <tissue>Myeloid</tissue>
    </source>
</reference>
<comment type="function">
    <text evidence="1 2 4">Coreceptor for bacterial lipopolysaccharide. In concert with LBP, binds to monomeric lipopolysaccharide and delivers it to the LY96/TLR4 complex, thereby mediating the innate immune response to bacterial lipopolysaccharide (LPS) (PubMed:1375269). Acts via MyD88, TIRAP and TRAF6, leading to NF-kappa-B activation, cytokine secretion and the inflammatory response. Acts as a coreceptor for TLR2:TLR6 heterodimer in response to diacylated lipopeptides and for TLR2:TLR1 heterodimer in response to triacylated lipopeptides, these clusters trigger signaling from the cell surface and subsequently are targeted to the Golgi in a lipid-raft dependent pathway (By similarity). Binds electronegative LDL (LDL(-)) and mediates the cytokine release induced by LDL(-) (By similarity).</text>
</comment>
<comment type="subunit">
    <text evidence="1 2">Belongs to the lipopolysaccharide (LPS) receptor, a multi-protein complex containing at least CD14, LY96 and TLR4. Interacts with LPS-bound LPB. Interacts with LPAR1. Interacts with the TLR2:TLR6 or TLR2:TLR1 heterodimers; upon interaction with ligands such as diacylated lipopeptides and triacylated lipopeptides, respectively. Interacts with MYO18A. Interacts with FSTL1.</text>
</comment>
<comment type="subcellular location">
    <subcellularLocation>
        <location evidence="4">Cell membrane</location>
        <topology evidence="4">Lipid-anchor</topology>
        <topology evidence="4">GPI-anchor</topology>
    </subcellularLocation>
    <subcellularLocation>
        <location evidence="1">Secreted</location>
    </subcellularLocation>
    <subcellularLocation>
        <location evidence="1">Membrane raft</location>
    </subcellularLocation>
    <subcellularLocation>
        <location evidence="1">Golgi apparatus</location>
    </subcellularLocation>
    <text evidence="1">Soluble, secreted forms seem to exist. They may arise by cleavage of the GPI anchor.</text>
</comment>
<comment type="domain">
    <text evidence="2">The C-terminal leucine-rich repeat (LRR) region is required for responses to smooth LPS.</text>
</comment>
<protein>
    <recommendedName>
        <fullName>Monocyte differentiation antigen CD14</fullName>
    </recommendedName>
    <alternativeName>
        <fullName>Myeloid cell-specific leucine-rich glycoprotein</fullName>
    </alternativeName>
    <cdAntigenName>CD14</cdAntigenName>
</protein>
<feature type="signal peptide" evidence="3">
    <location>
        <begin position="1"/>
        <end position="17"/>
    </location>
</feature>
<feature type="chain" id="PRO_0000020889" description="Monocyte differentiation antigen CD14">
    <location>
        <begin position="18"/>
        <end position="342"/>
    </location>
</feature>
<feature type="propeptide" id="PRO_0000020890" description="Removed in mature form" evidence="3">
    <location>
        <begin position="343"/>
        <end position="372"/>
    </location>
</feature>
<feature type="repeat" description="LRR 1">
    <location>
        <begin position="54"/>
        <end position="82"/>
    </location>
</feature>
<feature type="repeat" description="LRR 2">
    <location>
        <begin position="83"/>
        <end position="118"/>
    </location>
</feature>
<feature type="repeat" description="LRR 3">
    <location>
        <begin position="119"/>
        <end position="145"/>
    </location>
</feature>
<feature type="repeat" description="LRR 4">
    <location>
        <begin position="146"/>
        <end position="173"/>
    </location>
</feature>
<feature type="repeat" description="LRR 5">
    <location>
        <begin position="174"/>
        <end position="197"/>
    </location>
</feature>
<feature type="repeat" description="LRR 6">
    <location>
        <begin position="198"/>
        <end position="225"/>
    </location>
</feature>
<feature type="repeat" description="LRR 7">
    <location>
        <begin position="226"/>
        <end position="252"/>
    </location>
</feature>
<feature type="repeat" description="LRR 8">
    <location>
        <begin position="253"/>
        <end position="275"/>
    </location>
</feature>
<feature type="repeat" description="LRR 9">
    <location>
        <begin position="276"/>
        <end position="296"/>
    </location>
</feature>
<feature type="repeat" description="LRR 10">
    <location>
        <begin position="297"/>
        <end position="318"/>
    </location>
</feature>
<feature type="repeat" description="LRR 11">
    <location>
        <begin position="319"/>
        <end position="346"/>
    </location>
</feature>
<feature type="region of interest" description="Required for response to bacterial lipopolysaccharide (LPS)" evidence="2">
    <location>
        <begin position="287"/>
        <end position="372"/>
    </location>
</feature>
<feature type="lipid moiety-binding region" description="GPI-anchor amidated asparagine" evidence="3">
    <location>
        <position position="342"/>
    </location>
</feature>
<feature type="glycosylation site" description="N-linked (GlcNAc...) asparagine" evidence="3">
    <location>
        <position position="37"/>
    </location>
</feature>
<feature type="glycosylation site" description="N-linked (GlcNAc...) asparagine" evidence="3">
    <location>
        <position position="152"/>
    </location>
</feature>
<feature type="glycosylation site" description="N-linked (GlcNAc...) asparagine" evidence="3">
    <location>
        <position position="279"/>
    </location>
</feature>
<feature type="glycosylation site" description="N-linked (GlcNAc...) asparagine" evidence="3">
    <location>
        <position position="320"/>
    </location>
</feature>
<feature type="disulfide bond" evidence="1">
    <location>
        <begin position="25"/>
        <end position="36"/>
    </location>
</feature>
<feature type="disulfide bond" evidence="1">
    <location>
        <begin position="34"/>
        <end position="51"/>
    </location>
</feature>
<feature type="disulfide bond" evidence="1">
    <location>
        <begin position="188"/>
        <end position="218"/>
    </location>
</feature>
<feature type="disulfide bond" evidence="1">
    <location>
        <begin position="242"/>
        <end position="269"/>
    </location>
</feature>
<sequence>MEPVPCLLLLLLPLLRASTDTPEPCELDDDDIRCVCNFSDPQPDWSSALQCMPAVQVEMWGGGHSLEQFLRQADLYTDQRRYADVVKALRVRRLTVGAVQVPAPLLLGVLRVLGYSRLKELALEDIEVTGTAPPPPPLEATGPALSTLSLRNVSWPKGGAWLSELQQWLKPGLQVLNIAQAHTLAFSCEQVRTFSALTTLDLSENPGLGERGLVAALCPHKFPALQDLALRNAGMKTLQGVCAALAEAGVQPHHLDLSHNSLRADTQRCIWPSALNSLNLSFTGLQQVPKGLPAKLNVLDLSCNKLNRAPQPGELPKVVNLSLDGNPFLVPGASKLQEDLTNSGVFPACPPSPLAMGMSGTLALLQGARGFI</sequence>
<accession>Q28680</accession>
<evidence type="ECO:0000250" key="1">
    <source>
        <dbReference type="UniProtKB" id="P08571"/>
    </source>
</evidence>
<evidence type="ECO:0000250" key="2">
    <source>
        <dbReference type="UniProtKB" id="P10810"/>
    </source>
</evidence>
<evidence type="ECO:0000255" key="3"/>
<evidence type="ECO:0000269" key="4">
    <source>
    </source>
</evidence>
<dbReference type="EMBL" id="M85233">
    <property type="protein sequence ID" value="AAA31195.1"/>
    <property type="molecule type" value="mRNA"/>
</dbReference>
<dbReference type="EMBL" id="D16545">
    <property type="protein sequence ID" value="BAA21770.1"/>
    <property type="molecule type" value="mRNA"/>
</dbReference>
<dbReference type="RefSeq" id="NP_001075664.1">
    <property type="nucleotide sequence ID" value="NM_001082195.2"/>
</dbReference>
<dbReference type="SMR" id="Q28680"/>
<dbReference type="FunCoup" id="Q28680">
    <property type="interactions" value="66"/>
</dbReference>
<dbReference type="STRING" id="9986.ENSOCUP00000003648"/>
<dbReference type="GlyCosmos" id="Q28680">
    <property type="glycosylation" value="4 sites, No reported glycans"/>
</dbReference>
<dbReference type="PaxDb" id="9986-ENSOCUP00000003648"/>
<dbReference type="GeneID" id="100008983"/>
<dbReference type="KEGG" id="ocu:100008983"/>
<dbReference type="CTD" id="929"/>
<dbReference type="eggNOG" id="ENOG502SNYQ">
    <property type="taxonomic scope" value="Eukaryota"/>
</dbReference>
<dbReference type="InParanoid" id="Q28680"/>
<dbReference type="OrthoDB" id="21522at2759"/>
<dbReference type="Proteomes" id="UP000001811">
    <property type="component" value="Unplaced"/>
</dbReference>
<dbReference type="GO" id="GO:0009897">
    <property type="term" value="C:external side of plasma membrane"/>
    <property type="evidence" value="ECO:0000250"/>
    <property type="project" value="UniProtKB"/>
</dbReference>
<dbReference type="GO" id="GO:0005576">
    <property type="term" value="C:extracellular region"/>
    <property type="evidence" value="ECO:0007669"/>
    <property type="project" value="UniProtKB-SubCell"/>
</dbReference>
<dbReference type="GO" id="GO:0005794">
    <property type="term" value="C:Golgi apparatus"/>
    <property type="evidence" value="ECO:0000250"/>
    <property type="project" value="UniProtKB"/>
</dbReference>
<dbReference type="GO" id="GO:0046696">
    <property type="term" value="C:lipopolysaccharide receptor complex"/>
    <property type="evidence" value="ECO:0000250"/>
    <property type="project" value="UniProtKB"/>
</dbReference>
<dbReference type="GO" id="GO:0045121">
    <property type="term" value="C:membrane raft"/>
    <property type="evidence" value="ECO:0000250"/>
    <property type="project" value="UniProtKB"/>
</dbReference>
<dbReference type="GO" id="GO:0001530">
    <property type="term" value="F:lipopolysaccharide binding"/>
    <property type="evidence" value="ECO:0007669"/>
    <property type="project" value="TreeGrafter"/>
</dbReference>
<dbReference type="GO" id="GO:0071726">
    <property type="term" value="P:cellular response to diacyl bacterial lipopeptide"/>
    <property type="evidence" value="ECO:0000250"/>
    <property type="project" value="UniProtKB"/>
</dbReference>
<dbReference type="GO" id="GO:0071222">
    <property type="term" value="P:cellular response to lipopolysaccharide"/>
    <property type="evidence" value="ECO:0000250"/>
    <property type="project" value="UniProtKB"/>
</dbReference>
<dbReference type="GO" id="GO:0071727">
    <property type="term" value="P:cellular response to triacyl bacterial lipopeptide"/>
    <property type="evidence" value="ECO:0000250"/>
    <property type="project" value="UniProtKB"/>
</dbReference>
<dbReference type="GO" id="GO:0006954">
    <property type="term" value="P:inflammatory response"/>
    <property type="evidence" value="ECO:0007669"/>
    <property type="project" value="UniProtKB-KW"/>
</dbReference>
<dbReference type="GO" id="GO:0045087">
    <property type="term" value="P:innate immune response"/>
    <property type="evidence" value="ECO:0007669"/>
    <property type="project" value="UniProtKB-KW"/>
</dbReference>
<dbReference type="GO" id="GO:0031666">
    <property type="term" value="P:positive regulation of lipopolysaccharide-mediated signaling pathway"/>
    <property type="evidence" value="ECO:0000250"/>
    <property type="project" value="UniProtKB"/>
</dbReference>
<dbReference type="GO" id="GO:0034145">
    <property type="term" value="P:positive regulation of toll-like receptor 4 signaling pathway"/>
    <property type="evidence" value="ECO:0000250"/>
    <property type="project" value="UniProtKB"/>
</dbReference>
<dbReference type="GO" id="GO:0032760">
    <property type="term" value="P:positive regulation of tumor necrosis factor production"/>
    <property type="evidence" value="ECO:0000250"/>
    <property type="project" value="UniProtKB"/>
</dbReference>
<dbReference type="GO" id="GO:0032729">
    <property type="term" value="P:positive regulation of type II interferon production"/>
    <property type="evidence" value="ECO:0000250"/>
    <property type="project" value="UniProtKB"/>
</dbReference>
<dbReference type="GO" id="GO:0009617">
    <property type="term" value="P:response to bacterium"/>
    <property type="evidence" value="ECO:0000250"/>
    <property type="project" value="UniProtKB"/>
</dbReference>
<dbReference type="GO" id="GO:0034142">
    <property type="term" value="P:toll-like receptor 4 signaling pathway"/>
    <property type="evidence" value="ECO:0007669"/>
    <property type="project" value="TreeGrafter"/>
</dbReference>
<dbReference type="FunFam" id="3.80.10.10:FF:000244">
    <property type="entry name" value="Monocyte differentiation antigen CD14"/>
    <property type="match status" value="1"/>
</dbReference>
<dbReference type="Gene3D" id="3.80.10.10">
    <property type="entry name" value="Ribonuclease Inhibitor"/>
    <property type="match status" value="1"/>
</dbReference>
<dbReference type="InterPro" id="IPR032675">
    <property type="entry name" value="LRR_dom_sf"/>
</dbReference>
<dbReference type="InterPro" id="IPR016337">
    <property type="entry name" value="Monocyte_diff_Ag_CD14"/>
</dbReference>
<dbReference type="PANTHER" id="PTHR10630">
    <property type="entry name" value="MONOCYTE DIFFERENTIATION ANTIGEN CD14"/>
    <property type="match status" value="1"/>
</dbReference>
<dbReference type="PANTHER" id="PTHR10630:SF3">
    <property type="entry name" value="MONOCYTE DIFFERENTIATION ANTIGEN CD14"/>
    <property type="match status" value="1"/>
</dbReference>
<dbReference type="PIRSF" id="PIRSF002017">
    <property type="entry name" value="CD14"/>
    <property type="match status" value="1"/>
</dbReference>
<dbReference type="SUPFAM" id="SSF52047">
    <property type="entry name" value="RNI-like"/>
    <property type="match status" value="1"/>
</dbReference>
<proteinExistence type="evidence at transcript level"/>
<name>CD14_RABIT</name>